<protein>
    <recommendedName>
        <fullName evidence="1">Proline--tRNA ligase</fullName>
        <ecNumber evidence="1">6.1.1.15</ecNumber>
    </recommendedName>
    <alternativeName>
        <fullName evidence="1">Prolyl-tRNA synthetase</fullName>
        <shortName evidence="1">ProRS</shortName>
    </alternativeName>
</protein>
<dbReference type="EC" id="6.1.1.15" evidence="1"/>
<dbReference type="EMBL" id="AM421808">
    <property type="protein sequence ID" value="CAM10507.1"/>
    <property type="molecule type" value="Genomic_DNA"/>
</dbReference>
<dbReference type="RefSeq" id="WP_002224483.1">
    <property type="nucleotide sequence ID" value="NC_008767.1"/>
</dbReference>
<dbReference type="SMR" id="A1KUG4"/>
<dbReference type="KEGG" id="nmc:NMC1277"/>
<dbReference type="HOGENOM" id="CLU_016739_0_0_4"/>
<dbReference type="Proteomes" id="UP000002286">
    <property type="component" value="Chromosome"/>
</dbReference>
<dbReference type="GO" id="GO:0005829">
    <property type="term" value="C:cytosol"/>
    <property type="evidence" value="ECO:0007669"/>
    <property type="project" value="TreeGrafter"/>
</dbReference>
<dbReference type="GO" id="GO:0002161">
    <property type="term" value="F:aminoacyl-tRNA deacylase activity"/>
    <property type="evidence" value="ECO:0007669"/>
    <property type="project" value="InterPro"/>
</dbReference>
<dbReference type="GO" id="GO:0005524">
    <property type="term" value="F:ATP binding"/>
    <property type="evidence" value="ECO:0007669"/>
    <property type="project" value="UniProtKB-UniRule"/>
</dbReference>
<dbReference type="GO" id="GO:0004827">
    <property type="term" value="F:proline-tRNA ligase activity"/>
    <property type="evidence" value="ECO:0007669"/>
    <property type="project" value="UniProtKB-UniRule"/>
</dbReference>
<dbReference type="GO" id="GO:0006433">
    <property type="term" value="P:prolyl-tRNA aminoacylation"/>
    <property type="evidence" value="ECO:0007669"/>
    <property type="project" value="UniProtKB-UniRule"/>
</dbReference>
<dbReference type="CDD" id="cd04334">
    <property type="entry name" value="ProRS-INS"/>
    <property type="match status" value="1"/>
</dbReference>
<dbReference type="CDD" id="cd00861">
    <property type="entry name" value="ProRS_anticodon_short"/>
    <property type="match status" value="1"/>
</dbReference>
<dbReference type="CDD" id="cd00779">
    <property type="entry name" value="ProRS_core_prok"/>
    <property type="match status" value="1"/>
</dbReference>
<dbReference type="FunFam" id="3.30.930.10:FF:000043">
    <property type="entry name" value="Proline--tRNA ligase"/>
    <property type="match status" value="1"/>
</dbReference>
<dbReference type="FunFam" id="3.30.930.10:FF:000097">
    <property type="entry name" value="Proline--tRNA ligase"/>
    <property type="match status" value="1"/>
</dbReference>
<dbReference type="Gene3D" id="3.40.50.800">
    <property type="entry name" value="Anticodon-binding domain"/>
    <property type="match status" value="1"/>
</dbReference>
<dbReference type="Gene3D" id="3.30.930.10">
    <property type="entry name" value="Bira Bifunctional Protein, Domain 2"/>
    <property type="match status" value="2"/>
</dbReference>
<dbReference type="HAMAP" id="MF_01569">
    <property type="entry name" value="Pro_tRNA_synth_type1"/>
    <property type="match status" value="1"/>
</dbReference>
<dbReference type="InterPro" id="IPR002314">
    <property type="entry name" value="aa-tRNA-synt_IIb"/>
</dbReference>
<dbReference type="InterPro" id="IPR006195">
    <property type="entry name" value="aa-tRNA-synth_II"/>
</dbReference>
<dbReference type="InterPro" id="IPR045864">
    <property type="entry name" value="aa-tRNA-synth_II/BPL/LPL"/>
</dbReference>
<dbReference type="InterPro" id="IPR004154">
    <property type="entry name" value="Anticodon-bd"/>
</dbReference>
<dbReference type="InterPro" id="IPR036621">
    <property type="entry name" value="Anticodon-bd_dom_sf"/>
</dbReference>
<dbReference type="InterPro" id="IPR002316">
    <property type="entry name" value="Pro-tRNA-ligase_IIa"/>
</dbReference>
<dbReference type="InterPro" id="IPR004500">
    <property type="entry name" value="Pro-tRNA-synth_IIa_bac-type"/>
</dbReference>
<dbReference type="InterPro" id="IPR023717">
    <property type="entry name" value="Pro-tRNA-Synthase_IIa_type1"/>
</dbReference>
<dbReference type="InterPro" id="IPR050062">
    <property type="entry name" value="Pro-tRNA_synthetase"/>
</dbReference>
<dbReference type="InterPro" id="IPR044140">
    <property type="entry name" value="ProRS_anticodon_short"/>
</dbReference>
<dbReference type="InterPro" id="IPR033730">
    <property type="entry name" value="ProRS_core_prok"/>
</dbReference>
<dbReference type="InterPro" id="IPR036754">
    <property type="entry name" value="YbaK/aa-tRNA-synt-asso_dom_sf"/>
</dbReference>
<dbReference type="InterPro" id="IPR007214">
    <property type="entry name" value="YbaK/aa-tRNA-synth-assoc-dom"/>
</dbReference>
<dbReference type="NCBIfam" id="NF006625">
    <property type="entry name" value="PRK09194.1"/>
    <property type="match status" value="1"/>
</dbReference>
<dbReference type="NCBIfam" id="TIGR00409">
    <property type="entry name" value="proS_fam_II"/>
    <property type="match status" value="1"/>
</dbReference>
<dbReference type="PANTHER" id="PTHR42753">
    <property type="entry name" value="MITOCHONDRIAL RIBOSOME PROTEIN L39/PROLYL-TRNA LIGASE FAMILY MEMBER"/>
    <property type="match status" value="1"/>
</dbReference>
<dbReference type="PANTHER" id="PTHR42753:SF2">
    <property type="entry name" value="PROLINE--TRNA LIGASE"/>
    <property type="match status" value="1"/>
</dbReference>
<dbReference type="Pfam" id="PF03129">
    <property type="entry name" value="HGTP_anticodon"/>
    <property type="match status" value="1"/>
</dbReference>
<dbReference type="Pfam" id="PF00587">
    <property type="entry name" value="tRNA-synt_2b"/>
    <property type="match status" value="1"/>
</dbReference>
<dbReference type="Pfam" id="PF04073">
    <property type="entry name" value="tRNA_edit"/>
    <property type="match status" value="1"/>
</dbReference>
<dbReference type="PIRSF" id="PIRSF001535">
    <property type="entry name" value="ProRS_1"/>
    <property type="match status" value="1"/>
</dbReference>
<dbReference type="PRINTS" id="PR01046">
    <property type="entry name" value="TRNASYNTHPRO"/>
</dbReference>
<dbReference type="SUPFAM" id="SSF52954">
    <property type="entry name" value="Class II aaRS ABD-related"/>
    <property type="match status" value="1"/>
</dbReference>
<dbReference type="SUPFAM" id="SSF55681">
    <property type="entry name" value="Class II aaRS and biotin synthetases"/>
    <property type="match status" value="1"/>
</dbReference>
<dbReference type="SUPFAM" id="SSF55826">
    <property type="entry name" value="YbaK/ProRS associated domain"/>
    <property type="match status" value="1"/>
</dbReference>
<dbReference type="PROSITE" id="PS50862">
    <property type="entry name" value="AA_TRNA_LIGASE_II"/>
    <property type="match status" value="1"/>
</dbReference>
<reference key="1">
    <citation type="journal article" date="2007" name="PLoS Genet.">
        <title>Meningococcal genetic variation mechanisms viewed through comparative analysis of serogroup C strain FAM18.</title>
        <authorList>
            <person name="Bentley S.D."/>
            <person name="Vernikos G.S."/>
            <person name="Snyder L.A.S."/>
            <person name="Churcher C."/>
            <person name="Arrowsmith C."/>
            <person name="Chillingworth T."/>
            <person name="Cronin A."/>
            <person name="Davis P.H."/>
            <person name="Holroyd N.E."/>
            <person name="Jagels K."/>
            <person name="Maddison M."/>
            <person name="Moule S."/>
            <person name="Rabbinowitsch E."/>
            <person name="Sharp S."/>
            <person name="Unwin L."/>
            <person name="Whitehead S."/>
            <person name="Quail M.A."/>
            <person name="Achtman M."/>
            <person name="Barrell B.G."/>
            <person name="Saunders N.J."/>
            <person name="Parkhill J."/>
        </authorList>
    </citation>
    <scope>NUCLEOTIDE SEQUENCE [LARGE SCALE GENOMIC DNA]</scope>
    <source>
        <strain>ATCC 700532 / DSM 15464 / FAM18</strain>
    </source>
</reference>
<gene>
    <name evidence="1" type="primary">proS</name>
    <name type="ordered locus">NMC1277</name>
</gene>
<name>SYP_NEIMF</name>
<accession>A1KUG4</accession>
<proteinExistence type="inferred from homology"/>
<sequence>MKASQFFISTLKEAPAEAALASHKLMIRAGLIKANASGLYTWMPMGLRVLRKVENVVREEMARAGSVELLMPVVQPAELWQESGRWEFYGKELLRLKDRHDRDFCMGPTCEEVIADIVRKEINSYKQLPKNFYHIQTKFRDEVRPRFGVMRAREFVMKDAYSFHADYASLQTTYDAMYDAYCRIFTRLGLAFRPVAADTGSIGGTGSHEFQVLAESGEDVIAYSDTSDYAANIELAPTLPLKGERTAAQAELTKVHTPNVKTIESLVEFLNIPVEQTLKSIVVESENEGEIVLLLLRGDHEFNDIKAEKLAGVKSPLTMASSAAIVEQFGANGGSLGPVGFKGKVYADFATEKGADWVIGANEDGYHYTGFNFGRDAAEPEFVDLRNVVEGDESPDGQGRLKLARGIEVGHVFQLRDKYTQAMNVSFLDNNGKSQIMEMGCYGIGITRVVAAAIEQNNDEKGIIWTKAMAPFEVVIVPMNYKKSDAVREAADKIYAELLAAGADVLLDDRDERAGVLLNDSELLGIPHRIVIGDRALKEGNVEYAERRNNEAQAVAIGEIVARVTASLNG</sequence>
<evidence type="ECO:0000255" key="1">
    <source>
        <dbReference type="HAMAP-Rule" id="MF_01569"/>
    </source>
</evidence>
<feature type="chain" id="PRO_0000288355" description="Proline--tRNA ligase">
    <location>
        <begin position="1"/>
        <end position="570"/>
    </location>
</feature>
<keyword id="KW-0030">Aminoacyl-tRNA synthetase</keyword>
<keyword id="KW-0067">ATP-binding</keyword>
<keyword id="KW-0963">Cytoplasm</keyword>
<keyword id="KW-0436">Ligase</keyword>
<keyword id="KW-0547">Nucleotide-binding</keyword>
<keyword id="KW-0648">Protein biosynthesis</keyword>
<organism>
    <name type="scientific">Neisseria meningitidis serogroup C / serotype 2a (strain ATCC 700532 / DSM 15464 / FAM18)</name>
    <dbReference type="NCBI Taxonomy" id="272831"/>
    <lineage>
        <taxon>Bacteria</taxon>
        <taxon>Pseudomonadati</taxon>
        <taxon>Pseudomonadota</taxon>
        <taxon>Betaproteobacteria</taxon>
        <taxon>Neisseriales</taxon>
        <taxon>Neisseriaceae</taxon>
        <taxon>Neisseria</taxon>
    </lineage>
</organism>
<comment type="function">
    <text evidence="1">Catalyzes the attachment of proline to tRNA(Pro) in a two-step reaction: proline is first activated by ATP to form Pro-AMP and then transferred to the acceptor end of tRNA(Pro). As ProRS can inadvertently accommodate and process non-cognate amino acids such as alanine and cysteine, to avoid such errors it has two additional distinct editing activities against alanine. One activity is designated as 'pretransfer' editing and involves the tRNA(Pro)-independent hydrolysis of activated Ala-AMP. The other activity is designated 'posttransfer' editing and involves deacylation of mischarged Ala-tRNA(Pro). The misacylated Cys-tRNA(Pro) is not edited by ProRS.</text>
</comment>
<comment type="catalytic activity">
    <reaction evidence="1">
        <text>tRNA(Pro) + L-proline + ATP = L-prolyl-tRNA(Pro) + AMP + diphosphate</text>
        <dbReference type="Rhea" id="RHEA:14305"/>
        <dbReference type="Rhea" id="RHEA-COMP:9700"/>
        <dbReference type="Rhea" id="RHEA-COMP:9702"/>
        <dbReference type="ChEBI" id="CHEBI:30616"/>
        <dbReference type="ChEBI" id="CHEBI:33019"/>
        <dbReference type="ChEBI" id="CHEBI:60039"/>
        <dbReference type="ChEBI" id="CHEBI:78442"/>
        <dbReference type="ChEBI" id="CHEBI:78532"/>
        <dbReference type="ChEBI" id="CHEBI:456215"/>
        <dbReference type="EC" id="6.1.1.15"/>
    </reaction>
</comment>
<comment type="subunit">
    <text evidence="1">Homodimer.</text>
</comment>
<comment type="subcellular location">
    <subcellularLocation>
        <location evidence="1">Cytoplasm</location>
    </subcellularLocation>
</comment>
<comment type="domain">
    <text evidence="1">Consists of three domains: the N-terminal catalytic domain, the editing domain and the C-terminal anticodon-binding domain.</text>
</comment>
<comment type="similarity">
    <text evidence="1">Belongs to the class-II aminoacyl-tRNA synthetase family. ProS type 1 subfamily.</text>
</comment>